<protein>
    <recommendedName>
        <fullName evidence="1">7-cyano-7-deazaguanine synthase</fullName>
        <ecNumber evidence="1">6.3.4.20</ecNumber>
    </recommendedName>
    <alternativeName>
        <fullName evidence="1">7-cyano-7-carbaguanine synthase</fullName>
    </alternativeName>
    <alternativeName>
        <fullName evidence="1">PreQ(0) synthase</fullName>
    </alternativeName>
    <alternativeName>
        <fullName evidence="1">Queuosine biosynthesis protein QueC</fullName>
    </alternativeName>
</protein>
<reference key="1">
    <citation type="journal article" date="2000" name="Nature">
        <title>DNA sequence of both chromosomes of the cholera pathogen Vibrio cholerae.</title>
        <authorList>
            <person name="Heidelberg J.F."/>
            <person name="Eisen J.A."/>
            <person name="Nelson W.C."/>
            <person name="Clayton R.A."/>
            <person name="Gwinn M.L."/>
            <person name="Dodson R.J."/>
            <person name="Haft D.H."/>
            <person name="Hickey E.K."/>
            <person name="Peterson J.D."/>
            <person name="Umayam L.A."/>
            <person name="Gill S.R."/>
            <person name="Nelson K.E."/>
            <person name="Read T.D."/>
            <person name="Tettelin H."/>
            <person name="Richardson D.L."/>
            <person name="Ermolaeva M.D."/>
            <person name="Vamathevan J.J."/>
            <person name="Bass S."/>
            <person name="Qin H."/>
            <person name="Dragoi I."/>
            <person name="Sellers P."/>
            <person name="McDonald L.A."/>
            <person name="Utterback T.R."/>
            <person name="Fleischmann R.D."/>
            <person name="Nierman W.C."/>
            <person name="White O."/>
            <person name="Salzberg S.L."/>
            <person name="Smith H.O."/>
            <person name="Colwell R.R."/>
            <person name="Mekalanos J.J."/>
            <person name="Venter J.C."/>
            <person name="Fraser C.M."/>
        </authorList>
    </citation>
    <scope>NUCLEOTIDE SEQUENCE [LARGE SCALE GENOMIC DNA]</scope>
    <source>
        <strain>ATCC 39315 / El Tor Inaba N16961</strain>
    </source>
</reference>
<name>QUEC_VIBCH</name>
<feature type="chain" id="PRO_0000246955" description="7-cyano-7-deazaguanine synthase">
    <location>
        <begin position="1"/>
        <end position="231"/>
    </location>
</feature>
<feature type="binding site" evidence="1">
    <location>
        <begin position="8"/>
        <end position="18"/>
    </location>
    <ligand>
        <name>ATP</name>
        <dbReference type="ChEBI" id="CHEBI:30616"/>
    </ligand>
</feature>
<feature type="binding site" evidence="1">
    <location>
        <position position="187"/>
    </location>
    <ligand>
        <name>Zn(2+)</name>
        <dbReference type="ChEBI" id="CHEBI:29105"/>
    </ligand>
</feature>
<feature type="binding site" evidence="1">
    <location>
        <position position="196"/>
    </location>
    <ligand>
        <name>Zn(2+)</name>
        <dbReference type="ChEBI" id="CHEBI:29105"/>
    </ligand>
</feature>
<feature type="binding site" evidence="1">
    <location>
        <position position="199"/>
    </location>
    <ligand>
        <name>Zn(2+)</name>
        <dbReference type="ChEBI" id="CHEBI:29105"/>
    </ligand>
</feature>
<feature type="binding site" evidence="1">
    <location>
        <position position="202"/>
    </location>
    <ligand>
        <name>Zn(2+)</name>
        <dbReference type="ChEBI" id="CHEBI:29105"/>
    </ligand>
</feature>
<keyword id="KW-0067">ATP-binding</keyword>
<keyword id="KW-0436">Ligase</keyword>
<keyword id="KW-0479">Metal-binding</keyword>
<keyword id="KW-0547">Nucleotide-binding</keyword>
<keyword id="KW-0671">Queuosine biosynthesis</keyword>
<keyword id="KW-1185">Reference proteome</keyword>
<keyword id="KW-0862">Zinc</keyword>
<comment type="function">
    <text evidence="1">Catalyzes the ATP-dependent conversion of 7-carboxy-7-deazaguanine (CDG) to 7-cyano-7-deazaguanine (preQ(0)).</text>
</comment>
<comment type="catalytic activity">
    <reaction evidence="1">
        <text>7-carboxy-7-deazaguanine + NH4(+) + ATP = 7-cyano-7-deazaguanine + ADP + phosphate + H2O + H(+)</text>
        <dbReference type="Rhea" id="RHEA:27982"/>
        <dbReference type="ChEBI" id="CHEBI:15377"/>
        <dbReference type="ChEBI" id="CHEBI:15378"/>
        <dbReference type="ChEBI" id="CHEBI:28938"/>
        <dbReference type="ChEBI" id="CHEBI:30616"/>
        <dbReference type="ChEBI" id="CHEBI:43474"/>
        <dbReference type="ChEBI" id="CHEBI:45075"/>
        <dbReference type="ChEBI" id="CHEBI:61036"/>
        <dbReference type="ChEBI" id="CHEBI:456216"/>
        <dbReference type="EC" id="6.3.4.20"/>
    </reaction>
</comment>
<comment type="cofactor">
    <cofactor evidence="1">
        <name>Zn(2+)</name>
        <dbReference type="ChEBI" id="CHEBI:29105"/>
    </cofactor>
    <text evidence="1">Binds 1 zinc ion per subunit.</text>
</comment>
<comment type="pathway">
    <text evidence="1">Purine metabolism; 7-cyano-7-deazaguanine biosynthesis.</text>
</comment>
<comment type="similarity">
    <text evidence="1">Belongs to the QueC family.</text>
</comment>
<dbReference type="EC" id="6.3.4.20" evidence="1"/>
<dbReference type="EMBL" id="AE003852">
    <property type="protein sequence ID" value="AAF94524.1"/>
    <property type="molecule type" value="Genomic_DNA"/>
</dbReference>
<dbReference type="PIR" id="F82208">
    <property type="entry name" value="F82208"/>
</dbReference>
<dbReference type="RefSeq" id="NP_231010.1">
    <property type="nucleotide sequence ID" value="NC_002505.1"/>
</dbReference>
<dbReference type="RefSeq" id="WP_000710446.1">
    <property type="nucleotide sequence ID" value="NZ_LT906614.1"/>
</dbReference>
<dbReference type="SMR" id="Q9KS93"/>
<dbReference type="STRING" id="243277.VC_1366"/>
<dbReference type="DNASU" id="2614820"/>
<dbReference type="EnsemblBacteria" id="AAF94524">
    <property type="protein sequence ID" value="AAF94524"/>
    <property type="gene ID" value="VC_1366"/>
</dbReference>
<dbReference type="KEGG" id="vch:VC_1366"/>
<dbReference type="PATRIC" id="fig|243277.26.peg.1300"/>
<dbReference type="eggNOG" id="COG0603">
    <property type="taxonomic scope" value="Bacteria"/>
</dbReference>
<dbReference type="HOGENOM" id="CLU_081854_0_0_6"/>
<dbReference type="UniPathway" id="UPA00391"/>
<dbReference type="Proteomes" id="UP000000584">
    <property type="component" value="Chromosome 1"/>
</dbReference>
<dbReference type="GO" id="GO:0005524">
    <property type="term" value="F:ATP binding"/>
    <property type="evidence" value="ECO:0007669"/>
    <property type="project" value="UniProtKB-UniRule"/>
</dbReference>
<dbReference type="GO" id="GO:0016879">
    <property type="term" value="F:ligase activity, forming carbon-nitrogen bonds"/>
    <property type="evidence" value="ECO:0007669"/>
    <property type="project" value="UniProtKB-UniRule"/>
</dbReference>
<dbReference type="GO" id="GO:0008270">
    <property type="term" value="F:zinc ion binding"/>
    <property type="evidence" value="ECO:0007669"/>
    <property type="project" value="UniProtKB-UniRule"/>
</dbReference>
<dbReference type="GO" id="GO:0008616">
    <property type="term" value="P:queuosine biosynthetic process"/>
    <property type="evidence" value="ECO:0007669"/>
    <property type="project" value="UniProtKB-UniRule"/>
</dbReference>
<dbReference type="CDD" id="cd01995">
    <property type="entry name" value="QueC-like"/>
    <property type="match status" value="1"/>
</dbReference>
<dbReference type="FunFam" id="3.40.50.620:FF:000017">
    <property type="entry name" value="7-cyano-7-deazaguanine synthase"/>
    <property type="match status" value="1"/>
</dbReference>
<dbReference type="Gene3D" id="3.40.50.620">
    <property type="entry name" value="HUPs"/>
    <property type="match status" value="1"/>
</dbReference>
<dbReference type="HAMAP" id="MF_01633">
    <property type="entry name" value="QueC"/>
    <property type="match status" value="1"/>
</dbReference>
<dbReference type="InterPro" id="IPR018317">
    <property type="entry name" value="QueC"/>
</dbReference>
<dbReference type="InterPro" id="IPR014729">
    <property type="entry name" value="Rossmann-like_a/b/a_fold"/>
</dbReference>
<dbReference type="NCBIfam" id="TIGR00364">
    <property type="entry name" value="7-cyano-7-deazaguanine synthase QueC"/>
    <property type="match status" value="1"/>
</dbReference>
<dbReference type="NCBIfam" id="NF008317">
    <property type="entry name" value="PRK11106.1"/>
    <property type="match status" value="1"/>
</dbReference>
<dbReference type="PANTHER" id="PTHR42914">
    <property type="entry name" value="7-CYANO-7-DEAZAGUANINE SYNTHASE"/>
    <property type="match status" value="1"/>
</dbReference>
<dbReference type="PANTHER" id="PTHR42914:SF1">
    <property type="entry name" value="7-CYANO-7-DEAZAGUANINE SYNTHASE"/>
    <property type="match status" value="1"/>
</dbReference>
<dbReference type="Pfam" id="PF06508">
    <property type="entry name" value="QueC"/>
    <property type="match status" value="1"/>
</dbReference>
<dbReference type="PIRSF" id="PIRSF006293">
    <property type="entry name" value="ExsB"/>
    <property type="match status" value="1"/>
</dbReference>
<dbReference type="SUPFAM" id="SSF52402">
    <property type="entry name" value="Adenine nucleotide alpha hydrolases-like"/>
    <property type="match status" value="1"/>
</dbReference>
<gene>
    <name evidence="1" type="primary">queC</name>
    <name type="ordered locus">VC_1366</name>
</gene>
<sequence length="231" mass="25159">MKKAVVVFSGGQDSTTCLVQALKEFDEVHAITFDYGQRHKLEIEVAQQLAKQLGVTAHKVMDVSLLNELAISSLTRDDIPVSHELQANGLPNSFVPGRNILFLTLAGIYAYQIGATTVITGVCETDFSGYPDCRDEFVQAMNQALAKGMDLPLMIRTPLMWLNKAETWALADQLGALDLVRHQTLTCYNGLIGDGCGECPACGLRQAGLKAYLDNRDLIMSALKSKQSAAH</sequence>
<evidence type="ECO:0000255" key="1">
    <source>
        <dbReference type="HAMAP-Rule" id="MF_01633"/>
    </source>
</evidence>
<accession>Q9KS93</accession>
<organism>
    <name type="scientific">Vibrio cholerae serotype O1 (strain ATCC 39315 / El Tor Inaba N16961)</name>
    <dbReference type="NCBI Taxonomy" id="243277"/>
    <lineage>
        <taxon>Bacteria</taxon>
        <taxon>Pseudomonadati</taxon>
        <taxon>Pseudomonadota</taxon>
        <taxon>Gammaproteobacteria</taxon>
        <taxon>Vibrionales</taxon>
        <taxon>Vibrionaceae</taxon>
        <taxon>Vibrio</taxon>
    </lineage>
</organism>
<proteinExistence type="inferred from homology"/>